<dbReference type="EMBL" id="CP000500">
    <property type="protein sequence ID" value="ABN67905.1"/>
    <property type="molecule type" value="Genomic_DNA"/>
</dbReference>
<dbReference type="RefSeq" id="XP_001385934.1">
    <property type="nucleotide sequence ID" value="XM_001385897.1"/>
</dbReference>
<dbReference type="SMR" id="A3LY29"/>
<dbReference type="FunCoup" id="A3LY29">
    <property type="interactions" value="1382"/>
</dbReference>
<dbReference type="STRING" id="322104.A3LY29"/>
<dbReference type="GeneID" id="4839799"/>
<dbReference type="KEGG" id="pic:PICST_73391"/>
<dbReference type="eggNOG" id="KOG2314">
    <property type="taxonomic scope" value="Eukaryota"/>
</dbReference>
<dbReference type="HOGENOM" id="CLU_011152_4_0_1"/>
<dbReference type="InParanoid" id="A3LY29"/>
<dbReference type="OMA" id="LWGGPQF"/>
<dbReference type="OrthoDB" id="10250414at2759"/>
<dbReference type="Proteomes" id="UP000002258">
    <property type="component" value="Chromosome 6"/>
</dbReference>
<dbReference type="GO" id="GO:0010494">
    <property type="term" value="C:cytoplasmic stress granule"/>
    <property type="evidence" value="ECO:0007669"/>
    <property type="project" value="EnsemblFungi"/>
</dbReference>
<dbReference type="GO" id="GO:0016282">
    <property type="term" value="C:eukaryotic 43S preinitiation complex"/>
    <property type="evidence" value="ECO:0007669"/>
    <property type="project" value="UniProtKB-UniRule"/>
</dbReference>
<dbReference type="GO" id="GO:0033290">
    <property type="term" value="C:eukaryotic 48S preinitiation complex"/>
    <property type="evidence" value="ECO:0007669"/>
    <property type="project" value="UniProtKB-UniRule"/>
</dbReference>
<dbReference type="GO" id="GO:0071540">
    <property type="term" value="C:eukaryotic translation initiation factor 3 complex, eIF3e"/>
    <property type="evidence" value="ECO:0007669"/>
    <property type="project" value="EnsemblFungi"/>
</dbReference>
<dbReference type="GO" id="GO:0071541">
    <property type="term" value="C:eukaryotic translation initiation factor 3 complex, eIF3m"/>
    <property type="evidence" value="ECO:0007669"/>
    <property type="project" value="EnsemblFungi"/>
</dbReference>
<dbReference type="GO" id="GO:0043614">
    <property type="term" value="C:multi-eIF complex"/>
    <property type="evidence" value="ECO:0007669"/>
    <property type="project" value="EnsemblFungi"/>
</dbReference>
<dbReference type="GO" id="GO:0042802">
    <property type="term" value="F:identical protein binding"/>
    <property type="evidence" value="ECO:0007669"/>
    <property type="project" value="EnsemblFungi"/>
</dbReference>
<dbReference type="GO" id="GO:0003723">
    <property type="term" value="F:RNA binding"/>
    <property type="evidence" value="ECO:0007669"/>
    <property type="project" value="UniProtKB-UniRule"/>
</dbReference>
<dbReference type="GO" id="GO:0003743">
    <property type="term" value="F:translation initiation factor activity"/>
    <property type="evidence" value="ECO:0007669"/>
    <property type="project" value="UniProtKB-UniRule"/>
</dbReference>
<dbReference type="GO" id="GO:0031369">
    <property type="term" value="F:translation initiation factor binding"/>
    <property type="evidence" value="ECO:0007669"/>
    <property type="project" value="InterPro"/>
</dbReference>
<dbReference type="GO" id="GO:0001732">
    <property type="term" value="P:formation of cytoplasmic translation initiation complex"/>
    <property type="evidence" value="ECO:0007669"/>
    <property type="project" value="UniProtKB-UniRule"/>
</dbReference>
<dbReference type="CDD" id="cd12278">
    <property type="entry name" value="RRM_eIF3B"/>
    <property type="match status" value="1"/>
</dbReference>
<dbReference type="FunFam" id="3.30.70.330:FF:000235">
    <property type="entry name" value="Eukaryotic translation initiation factor 3 subunit B"/>
    <property type="match status" value="1"/>
</dbReference>
<dbReference type="Gene3D" id="3.30.70.330">
    <property type="match status" value="1"/>
</dbReference>
<dbReference type="Gene3D" id="2.130.10.10">
    <property type="entry name" value="YVTN repeat-like/Quinoprotein amine dehydrogenase"/>
    <property type="match status" value="1"/>
</dbReference>
<dbReference type="HAMAP" id="MF_03001">
    <property type="entry name" value="eIF3b"/>
    <property type="match status" value="1"/>
</dbReference>
<dbReference type="InterPro" id="IPR011400">
    <property type="entry name" value="EIF3B"/>
</dbReference>
<dbReference type="InterPro" id="IPR034363">
    <property type="entry name" value="eIF3B_RRM"/>
</dbReference>
<dbReference type="InterPro" id="IPR012677">
    <property type="entry name" value="Nucleotide-bd_a/b_plait_sf"/>
</dbReference>
<dbReference type="InterPro" id="IPR035979">
    <property type="entry name" value="RBD_domain_sf"/>
</dbReference>
<dbReference type="InterPro" id="IPR000504">
    <property type="entry name" value="RRM_dom"/>
</dbReference>
<dbReference type="InterPro" id="IPR013979">
    <property type="entry name" value="TIF_beta_prop-like"/>
</dbReference>
<dbReference type="InterPro" id="IPR015943">
    <property type="entry name" value="WD40/YVTN_repeat-like_dom_sf"/>
</dbReference>
<dbReference type="PANTHER" id="PTHR14068">
    <property type="entry name" value="EUKARYOTIC TRANSLATION INITIATION FACTOR 3 EIF3 -RELATED"/>
    <property type="match status" value="1"/>
</dbReference>
<dbReference type="PANTHER" id="PTHR14068:SF0">
    <property type="entry name" value="EUKARYOTIC TRANSLATION INITIATION FACTOR 3 SUBUNIT B"/>
    <property type="match status" value="1"/>
</dbReference>
<dbReference type="Pfam" id="PF08662">
    <property type="entry name" value="eIF2A"/>
    <property type="match status" value="1"/>
</dbReference>
<dbReference type="Pfam" id="PF00076">
    <property type="entry name" value="RRM_1"/>
    <property type="match status" value="1"/>
</dbReference>
<dbReference type="PIRSF" id="PIRSF036424">
    <property type="entry name" value="eIF3b"/>
    <property type="match status" value="1"/>
</dbReference>
<dbReference type="SMART" id="SM00360">
    <property type="entry name" value="RRM"/>
    <property type="match status" value="1"/>
</dbReference>
<dbReference type="SUPFAM" id="SSF82171">
    <property type="entry name" value="DPP6 N-terminal domain-like"/>
    <property type="match status" value="1"/>
</dbReference>
<dbReference type="SUPFAM" id="SSF54928">
    <property type="entry name" value="RNA-binding domain, RBD"/>
    <property type="match status" value="1"/>
</dbReference>
<dbReference type="PROSITE" id="PS50102">
    <property type="entry name" value="RRM"/>
    <property type="match status" value="1"/>
</dbReference>
<proteinExistence type="inferred from homology"/>
<sequence>MSLTEAEYHELEKQVNLDDIDFSDLEEQYEVDVGLDNYVVVDGAPIAPEAKVPVLIKVLKKLFNTVGKVVEGDEGIYMPLEDGKSKGYLFVQFETSEMAEAAIKQLHGKKLDQKHRLLVNRLSDIEKYGVEGNVAAEFVEPELPPFKSHGYLKSWLQDPQGRDQIALHHSETFGVFWNKKKSDPEPVFEPRKFFTSKYAKFSPKGTYLFSIHPQGVQSWGGADFSSIDKFMHNQVRLVDFSPNEKYMVTLSPLPITAPDSAAERAVFPFGPESYGHKLVIWDLTTGEPARTFALPPHLEGQKEMPWPLVKWSHDDKYCARQGPGALAVYETPSFQLLDKKLIKIDDIVDFEWAPAGVHLANNKSENGHHLLSYWTPESSNQTARVAVMQIPTRQILRTVNLFQVSDCKMHWQSEGKLLCVKVDRHTKSGKTIFTNLEFFKTTEKDIPVEKLELKEIVINFAWEPKSERFVIISRLDDGNLNSAIPKNIIDFYAPDVNGKGKSATSVYKSYKTITDKHSNTVFWSPKGRYVVVATISRSNGEIEFFDVSFDDSNKNAPANVKLLKNDKFSGMTNISWDPSGRFVATWSSSWLHTIENGYKLYEFTGNLLRDDSIDQFKEFIWRPRPASLLNSADRKKVRANLREYSAQFEESDAMEADAALRELIYARRRALEDWKAYRAKHASKAVKANEVQAEIIEEIKEEIIEEKEEIVE</sequence>
<comment type="function">
    <text evidence="1">RNA-binding component of the eukaryotic translation initiation factor 3 (eIF-3) complex, which is involved in protein synthesis of a specialized repertoire of mRNAs and, together with other initiation factors, stimulates binding of mRNA and methionyl-tRNAi to the 40S ribosome. The eIF-3 complex specifically targets and initiates translation of a subset of mRNAs involved in cell proliferation.</text>
</comment>
<comment type="subunit">
    <text evidence="1">Component of the eukaryotic translation initiation factor 3 (eIF-3) complex.</text>
</comment>
<comment type="subcellular location">
    <subcellularLocation>
        <location evidence="1">Cytoplasm</location>
    </subcellularLocation>
</comment>
<comment type="similarity">
    <text evidence="1">Belongs to the eIF-3 subunit B family.</text>
</comment>
<evidence type="ECO:0000255" key="1">
    <source>
        <dbReference type="HAMAP-Rule" id="MF_03001"/>
    </source>
</evidence>
<name>EIF3B_PICST</name>
<feature type="chain" id="PRO_0000363824" description="Eukaryotic translation initiation factor 3 subunit B">
    <location>
        <begin position="1"/>
        <end position="712"/>
    </location>
</feature>
<feature type="domain" description="RRM" evidence="1">
    <location>
        <begin position="37"/>
        <end position="124"/>
    </location>
</feature>
<feature type="repeat" description="WD 1">
    <location>
        <begin position="191"/>
        <end position="229"/>
    </location>
</feature>
<feature type="repeat" description="WD 2">
    <location>
        <begin position="230"/>
        <end position="293"/>
    </location>
</feature>
<feature type="repeat" description="WD 3">
    <location>
        <begin position="301"/>
        <end position="339"/>
    </location>
</feature>
<feature type="repeat" description="WD 4">
    <location>
        <begin position="342"/>
        <end position="384"/>
    </location>
</feature>
<feature type="repeat" description="WD 5">
    <location>
        <begin position="452"/>
        <end position="493"/>
    </location>
</feature>
<feature type="repeat" description="WD 6">
    <location>
        <begin position="513"/>
        <end position="555"/>
    </location>
</feature>
<feature type="repeat" description="WD 7">
    <location>
        <begin position="566"/>
        <end position="604"/>
    </location>
</feature>
<feature type="region of interest" description="Sufficient for interaction with PIC8" evidence="1">
    <location>
        <begin position="1"/>
        <end position="224"/>
    </location>
</feature>
<feature type="region of interest" description="Sufficient for interaction with HCR1 and TIF32" evidence="1">
    <location>
        <begin position="1"/>
        <end position="98"/>
    </location>
</feature>
<accession>A3LY29</accession>
<protein>
    <recommendedName>
        <fullName evidence="1">Eukaryotic translation initiation factor 3 subunit B</fullName>
        <shortName evidence="1">eIF3b</shortName>
    </recommendedName>
    <alternativeName>
        <fullName evidence="1">Eukaryotic translation initiation factor 3 90 kDa subunit homolog</fullName>
        <shortName evidence="1">eIF3 p90</shortName>
    </alternativeName>
    <alternativeName>
        <fullName>Translation initiation factor eIF3 p90 subunit homolog</fullName>
    </alternativeName>
</protein>
<organism>
    <name type="scientific">Scheffersomyces stipitis (strain ATCC 58785 / CBS 6054 / NBRC 10063 / NRRL Y-11545)</name>
    <name type="common">Yeast</name>
    <name type="synonym">Pichia stipitis</name>
    <dbReference type="NCBI Taxonomy" id="322104"/>
    <lineage>
        <taxon>Eukaryota</taxon>
        <taxon>Fungi</taxon>
        <taxon>Dikarya</taxon>
        <taxon>Ascomycota</taxon>
        <taxon>Saccharomycotina</taxon>
        <taxon>Pichiomycetes</taxon>
        <taxon>Debaryomycetaceae</taxon>
        <taxon>Scheffersomyces</taxon>
    </lineage>
</organism>
<reference key="1">
    <citation type="journal article" date="2007" name="Nat. Biotechnol.">
        <title>Genome sequence of the lignocellulose-bioconverting and xylose-fermenting yeast Pichia stipitis.</title>
        <authorList>
            <person name="Jeffries T.W."/>
            <person name="Grigoriev I.V."/>
            <person name="Grimwood J."/>
            <person name="Laplaza J.M."/>
            <person name="Aerts A."/>
            <person name="Salamov A."/>
            <person name="Schmutz J."/>
            <person name="Lindquist E."/>
            <person name="Dehal P."/>
            <person name="Shapiro H."/>
            <person name="Jin Y.-S."/>
            <person name="Passoth V."/>
            <person name="Richardson P.M."/>
        </authorList>
    </citation>
    <scope>NUCLEOTIDE SEQUENCE [LARGE SCALE GENOMIC DNA]</scope>
    <source>
        <strain>ATCC 58785 / CBS 6054 / NBRC 10063 / NRRL Y-11545</strain>
    </source>
</reference>
<gene>
    <name evidence="1" type="primary">PRT1</name>
    <name type="ORF">PICST_73391</name>
</gene>
<keyword id="KW-0963">Cytoplasm</keyword>
<keyword id="KW-0396">Initiation factor</keyword>
<keyword id="KW-0648">Protein biosynthesis</keyword>
<keyword id="KW-1185">Reference proteome</keyword>
<keyword id="KW-0677">Repeat</keyword>
<keyword id="KW-0694">RNA-binding</keyword>
<keyword id="KW-0853">WD repeat</keyword>